<name>FTSL_MOOTA</name>
<protein>
    <recommendedName>
        <fullName evidence="1">Cell division protein FtsL</fullName>
    </recommendedName>
</protein>
<proteinExistence type="inferred from homology"/>
<feature type="chain" id="PRO_0000414561" description="Cell division protein FtsL">
    <location>
        <begin position="1"/>
        <end position="174"/>
    </location>
</feature>
<feature type="topological domain" description="Cytoplasmic" evidence="1">
    <location>
        <begin position="1"/>
        <end position="38"/>
    </location>
</feature>
<feature type="transmembrane region" description="Helical" evidence="1">
    <location>
        <begin position="39"/>
        <end position="59"/>
    </location>
</feature>
<feature type="topological domain" description="Extracellular" evidence="1">
    <location>
        <begin position="60"/>
        <end position="174"/>
    </location>
</feature>
<dbReference type="EMBL" id="CP000232">
    <property type="protein sequence ID" value="ABC19153.1"/>
    <property type="molecule type" value="Genomic_DNA"/>
</dbReference>
<dbReference type="RefSeq" id="YP_429696.1">
    <property type="nucleotide sequence ID" value="NC_007644.1"/>
</dbReference>
<dbReference type="SMR" id="Q2RK86"/>
<dbReference type="STRING" id="264732.Moth_0836"/>
<dbReference type="EnsemblBacteria" id="ABC19153">
    <property type="protein sequence ID" value="ABC19153"/>
    <property type="gene ID" value="Moth_0836"/>
</dbReference>
<dbReference type="KEGG" id="mta:Moth_0836"/>
<dbReference type="PATRIC" id="fig|264732.11.peg.898"/>
<dbReference type="eggNOG" id="COG4839">
    <property type="taxonomic scope" value="Bacteria"/>
</dbReference>
<dbReference type="HOGENOM" id="CLU_1538366_0_0_9"/>
<dbReference type="OrthoDB" id="2082132at2"/>
<dbReference type="GO" id="GO:0032153">
    <property type="term" value="C:cell division site"/>
    <property type="evidence" value="ECO:0007669"/>
    <property type="project" value="UniProtKB-UniRule"/>
</dbReference>
<dbReference type="GO" id="GO:0005886">
    <property type="term" value="C:plasma membrane"/>
    <property type="evidence" value="ECO:0007669"/>
    <property type="project" value="UniProtKB-SubCell"/>
</dbReference>
<dbReference type="GO" id="GO:0043093">
    <property type="term" value="P:FtsZ-dependent cytokinesis"/>
    <property type="evidence" value="ECO:0007669"/>
    <property type="project" value="UniProtKB-UniRule"/>
</dbReference>
<dbReference type="HAMAP" id="MF_00910">
    <property type="entry name" value="FtsL"/>
    <property type="match status" value="1"/>
</dbReference>
<dbReference type="InterPro" id="IPR011922">
    <property type="entry name" value="Cell_div_FtsL"/>
</dbReference>
<dbReference type="InterPro" id="IPR007060">
    <property type="entry name" value="FtsL/DivIC"/>
</dbReference>
<dbReference type="NCBIfam" id="TIGR02209">
    <property type="entry name" value="ftsL_broad"/>
    <property type="match status" value="1"/>
</dbReference>
<dbReference type="Pfam" id="PF04977">
    <property type="entry name" value="DivIC"/>
    <property type="match status" value="1"/>
</dbReference>
<comment type="function">
    <text evidence="1">Essential cell division protein.</text>
</comment>
<comment type="subcellular location">
    <subcellularLocation>
        <location evidence="1">Cell membrane</location>
        <topology evidence="1">Single-pass type II membrane protein</topology>
    </subcellularLocation>
    <text evidence="1">Localizes to the division septum where it forms a ring structure.</text>
</comment>
<comment type="similarity">
    <text evidence="1">Belongs to the FtsL family.</text>
</comment>
<accession>Q2RK86</accession>
<keyword id="KW-0131">Cell cycle</keyword>
<keyword id="KW-0132">Cell division</keyword>
<keyword id="KW-1003">Cell membrane</keyword>
<keyword id="KW-0472">Membrane</keyword>
<keyword id="KW-0812">Transmembrane</keyword>
<keyword id="KW-1133">Transmembrane helix</keyword>
<organism>
    <name type="scientific">Moorella thermoacetica (strain ATCC 39073 / JCM 9320)</name>
    <dbReference type="NCBI Taxonomy" id="264732"/>
    <lineage>
        <taxon>Bacteria</taxon>
        <taxon>Bacillati</taxon>
        <taxon>Bacillota</taxon>
        <taxon>Clostridia</taxon>
        <taxon>Moorellales</taxon>
        <taxon>Moorellaceae</taxon>
        <taxon>Moorella</taxon>
    </lineage>
</organism>
<sequence>MLAAPRELSYIPQPVVSSKQSPRSGLSNRRRESRARQKILLLGLVLMGFVIGLSLTFLTMQVLIKGYKIDSLKRELSTLQRENEQLQLEVARLKAPERVARVATTKLGMVEPKTEQIYYVPEQAGNGKQVQVATTEPSRPAVTGAAPGRQAWWVALAEALHQWLEPARQAGAGV</sequence>
<reference key="1">
    <citation type="journal article" date="2008" name="Environ. Microbiol.">
        <title>The complete genome sequence of Moorella thermoacetica (f. Clostridium thermoaceticum).</title>
        <authorList>
            <person name="Pierce E."/>
            <person name="Xie G."/>
            <person name="Barabote R.D."/>
            <person name="Saunders E."/>
            <person name="Han C.S."/>
            <person name="Detter J.C."/>
            <person name="Richardson P."/>
            <person name="Brettin T.S."/>
            <person name="Das A."/>
            <person name="Ljungdahl L.G."/>
            <person name="Ragsdale S.W."/>
        </authorList>
    </citation>
    <scope>NUCLEOTIDE SEQUENCE [LARGE SCALE GENOMIC DNA]</scope>
    <source>
        <strain>ATCC 39073 / JCM 9320</strain>
    </source>
</reference>
<evidence type="ECO:0000255" key="1">
    <source>
        <dbReference type="HAMAP-Rule" id="MF_00910"/>
    </source>
</evidence>
<gene>
    <name evidence="1" type="primary">ftsL</name>
    <name type="ordered locus">Moth_0836</name>
</gene>